<evidence type="ECO:0000255" key="1">
    <source>
        <dbReference type="HAMAP-Rule" id="MF_00361"/>
    </source>
</evidence>
<accession>A6V2Y8</accession>
<organism>
    <name type="scientific">Pseudomonas paraeruginosa (strain DSM 24068 / PA7)</name>
    <name type="common">Pseudomonas aeruginosa (strain PA7)</name>
    <dbReference type="NCBI Taxonomy" id="381754"/>
    <lineage>
        <taxon>Bacteria</taxon>
        <taxon>Pseudomonadati</taxon>
        <taxon>Pseudomonadota</taxon>
        <taxon>Gammaproteobacteria</taxon>
        <taxon>Pseudomonadales</taxon>
        <taxon>Pseudomonadaceae</taxon>
        <taxon>Pseudomonas</taxon>
        <taxon>Pseudomonas paraeruginosa</taxon>
    </lineage>
</organism>
<dbReference type="EC" id="2.7.1.23" evidence="1"/>
<dbReference type="EMBL" id="CP000744">
    <property type="protein sequence ID" value="ABR86842.1"/>
    <property type="molecule type" value="Genomic_DNA"/>
</dbReference>
<dbReference type="RefSeq" id="WP_003091343.1">
    <property type="nucleotide sequence ID" value="NC_009656.1"/>
</dbReference>
<dbReference type="SMR" id="A6V2Y8"/>
<dbReference type="KEGG" id="pap:PSPA7_2050"/>
<dbReference type="HOGENOM" id="CLU_008831_0_1_6"/>
<dbReference type="Proteomes" id="UP000001582">
    <property type="component" value="Chromosome"/>
</dbReference>
<dbReference type="GO" id="GO:0005737">
    <property type="term" value="C:cytoplasm"/>
    <property type="evidence" value="ECO:0007669"/>
    <property type="project" value="UniProtKB-SubCell"/>
</dbReference>
<dbReference type="GO" id="GO:0005524">
    <property type="term" value="F:ATP binding"/>
    <property type="evidence" value="ECO:0007669"/>
    <property type="project" value="UniProtKB-KW"/>
</dbReference>
<dbReference type="GO" id="GO:0046872">
    <property type="term" value="F:metal ion binding"/>
    <property type="evidence" value="ECO:0007669"/>
    <property type="project" value="UniProtKB-UniRule"/>
</dbReference>
<dbReference type="GO" id="GO:0051287">
    <property type="term" value="F:NAD binding"/>
    <property type="evidence" value="ECO:0007669"/>
    <property type="project" value="UniProtKB-ARBA"/>
</dbReference>
<dbReference type="GO" id="GO:0003951">
    <property type="term" value="F:NAD+ kinase activity"/>
    <property type="evidence" value="ECO:0007669"/>
    <property type="project" value="UniProtKB-UniRule"/>
</dbReference>
<dbReference type="GO" id="GO:0019674">
    <property type="term" value="P:NAD metabolic process"/>
    <property type="evidence" value="ECO:0007669"/>
    <property type="project" value="InterPro"/>
</dbReference>
<dbReference type="GO" id="GO:0006741">
    <property type="term" value="P:NADP biosynthetic process"/>
    <property type="evidence" value="ECO:0007669"/>
    <property type="project" value="UniProtKB-UniRule"/>
</dbReference>
<dbReference type="FunFam" id="2.60.200.30:FF:000001">
    <property type="entry name" value="NAD kinase"/>
    <property type="match status" value="1"/>
</dbReference>
<dbReference type="Gene3D" id="3.40.50.10330">
    <property type="entry name" value="Probable inorganic polyphosphate/atp-NAD kinase, domain 1"/>
    <property type="match status" value="1"/>
</dbReference>
<dbReference type="Gene3D" id="2.60.200.30">
    <property type="entry name" value="Probable inorganic polyphosphate/atp-NAD kinase, domain 2"/>
    <property type="match status" value="1"/>
</dbReference>
<dbReference type="HAMAP" id="MF_00361">
    <property type="entry name" value="NAD_kinase"/>
    <property type="match status" value="1"/>
</dbReference>
<dbReference type="InterPro" id="IPR017438">
    <property type="entry name" value="ATP-NAD_kinase_N"/>
</dbReference>
<dbReference type="InterPro" id="IPR017437">
    <property type="entry name" value="ATP-NAD_kinase_PpnK-typ_C"/>
</dbReference>
<dbReference type="InterPro" id="IPR016064">
    <property type="entry name" value="NAD/diacylglycerol_kinase_sf"/>
</dbReference>
<dbReference type="InterPro" id="IPR002504">
    <property type="entry name" value="NADK"/>
</dbReference>
<dbReference type="NCBIfam" id="NF002306">
    <property type="entry name" value="PRK01231.1"/>
    <property type="match status" value="1"/>
</dbReference>
<dbReference type="PANTHER" id="PTHR20275">
    <property type="entry name" value="NAD KINASE"/>
    <property type="match status" value="1"/>
</dbReference>
<dbReference type="PANTHER" id="PTHR20275:SF0">
    <property type="entry name" value="NAD KINASE"/>
    <property type="match status" value="1"/>
</dbReference>
<dbReference type="Pfam" id="PF01513">
    <property type="entry name" value="NAD_kinase"/>
    <property type="match status" value="1"/>
</dbReference>
<dbReference type="Pfam" id="PF20143">
    <property type="entry name" value="NAD_kinase_C"/>
    <property type="match status" value="1"/>
</dbReference>
<dbReference type="SUPFAM" id="SSF111331">
    <property type="entry name" value="NAD kinase/diacylglycerol kinase-like"/>
    <property type="match status" value="1"/>
</dbReference>
<sequence length="295" mass="32140">MEPFRNIGIIGRLGSTQVLDTIRRLKKFLIDRHLHVILEDTIAEVLPGHGLQTCSRKIMGEICDLVVVVGGDGSMLGAARALARHKVPVLGINRGSLGFLTDIRPDELEAKVGEVLDGQYIVESRFLLDAQVRRGIDSMGQGDALNDVVLHPGKSTRMIEFELYIDGQFVCSQKADGLIVATPTGSTAYALSAGGPIMHPKLDAIVIVPMYPHMLSSRPIVVDGNSELKIVVSPNMQIYPQVSCDGQNHFTCAPGDTVTISKKPQKLRLIHPIDHNYYEICRTKLGWGSRLGGGD</sequence>
<feature type="chain" id="PRO_1000005428" description="NAD kinase">
    <location>
        <begin position="1"/>
        <end position="295"/>
    </location>
</feature>
<feature type="active site" description="Proton acceptor" evidence="1">
    <location>
        <position position="72"/>
    </location>
</feature>
<feature type="binding site" evidence="1">
    <location>
        <begin position="72"/>
        <end position="73"/>
    </location>
    <ligand>
        <name>NAD(+)</name>
        <dbReference type="ChEBI" id="CHEBI:57540"/>
    </ligand>
</feature>
<feature type="binding site" evidence="1">
    <location>
        <begin position="146"/>
        <end position="147"/>
    </location>
    <ligand>
        <name>NAD(+)</name>
        <dbReference type="ChEBI" id="CHEBI:57540"/>
    </ligand>
</feature>
<feature type="binding site" evidence="1">
    <location>
        <position position="157"/>
    </location>
    <ligand>
        <name>NAD(+)</name>
        <dbReference type="ChEBI" id="CHEBI:57540"/>
    </ligand>
</feature>
<feature type="binding site" evidence="1">
    <location>
        <position position="174"/>
    </location>
    <ligand>
        <name>NAD(+)</name>
        <dbReference type="ChEBI" id="CHEBI:57540"/>
    </ligand>
</feature>
<feature type="binding site" evidence="1">
    <location>
        <position position="176"/>
    </location>
    <ligand>
        <name>NAD(+)</name>
        <dbReference type="ChEBI" id="CHEBI:57540"/>
    </ligand>
</feature>
<feature type="binding site" evidence="1">
    <location>
        <begin position="187"/>
        <end position="192"/>
    </location>
    <ligand>
        <name>NAD(+)</name>
        <dbReference type="ChEBI" id="CHEBI:57540"/>
    </ligand>
</feature>
<feature type="binding site" evidence="1">
    <location>
        <position position="247"/>
    </location>
    <ligand>
        <name>NAD(+)</name>
        <dbReference type="ChEBI" id="CHEBI:57540"/>
    </ligand>
</feature>
<protein>
    <recommendedName>
        <fullName evidence="1">NAD kinase</fullName>
        <ecNumber evidence="1">2.7.1.23</ecNumber>
    </recommendedName>
    <alternativeName>
        <fullName evidence="1">ATP-dependent NAD kinase</fullName>
    </alternativeName>
</protein>
<comment type="function">
    <text evidence="1">Involved in the regulation of the intracellular balance of NAD and NADP, and is a key enzyme in the biosynthesis of NADP. Catalyzes specifically the phosphorylation on 2'-hydroxyl of the adenosine moiety of NAD to yield NADP.</text>
</comment>
<comment type="catalytic activity">
    <reaction evidence="1">
        <text>NAD(+) + ATP = ADP + NADP(+) + H(+)</text>
        <dbReference type="Rhea" id="RHEA:18629"/>
        <dbReference type="ChEBI" id="CHEBI:15378"/>
        <dbReference type="ChEBI" id="CHEBI:30616"/>
        <dbReference type="ChEBI" id="CHEBI:57540"/>
        <dbReference type="ChEBI" id="CHEBI:58349"/>
        <dbReference type="ChEBI" id="CHEBI:456216"/>
        <dbReference type="EC" id="2.7.1.23"/>
    </reaction>
</comment>
<comment type="cofactor">
    <cofactor evidence="1">
        <name>a divalent metal cation</name>
        <dbReference type="ChEBI" id="CHEBI:60240"/>
    </cofactor>
</comment>
<comment type="subcellular location">
    <subcellularLocation>
        <location evidence="1">Cytoplasm</location>
    </subcellularLocation>
</comment>
<comment type="similarity">
    <text evidence="1">Belongs to the NAD kinase family.</text>
</comment>
<name>NADK_PSEP7</name>
<keyword id="KW-0067">ATP-binding</keyword>
<keyword id="KW-0963">Cytoplasm</keyword>
<keyword id="KW-0418">Kinase</keyword>
<keyword id="KW-0520">NAD</keyword>
<keyword id="KW-0521">NADP</keyword>
<keyword id="KW-0547">Nucleotide-binding</keyword>
<keyword id="KW-0808">Transferase</keyword>
<proteinExistence type="inferred from homology"/>
<gene>
    <name evidence="1" type="primary">nadK</name>
    <name type="ordered locus">PSPA7_2050</name>
</gene>
<reference key="1">
    <citation type="submission" date="2007-06" db="EMBL/GenBank/DDBJ databases">
        <authorList>
            <person name="Dodson R.J."/>
            <person name="Harkins D."/>
            <person name="Paulsen I.T."/>
        </authorList>
    </citation>
    <scope>NUCLEOTIDE SEQUENCE [LARGE SCALE GENOMIC DNA]</scope>
    <source>
        <strain>DSM 24068 / PA7</strain>
    </source>
</reference>